<evidence type="ECO:0000255" key="1">
    <source>
        <dbReference type="HAMAP-Rule" id="MF_01844"/>
    </source>
</evidence>
<name>NHAA_NITSB</name>
<sequence length="388" mass="42064">MKGKVVALLHKESTIGILLIIATLLALFLENSPLSSFYDSFLHTPVEIRFGALHIAKPLLLWVNDGLMAVFFFYVGLEIKREIVDGHLSQISQMTFPAIAALGGMVVPALLFASLNFHDEKALNGWAIPTATDIAFALGVLSLLGNRIPFSLKVFLMTLAIVDDLGAIIVIALFYTTKLSLTSLVVASIALTILFIMNRMCVISKGAYILVGVALWVSVLKSGVHATLAGVALALLIPYRINKNGKIYELTKQMEHGLHLWVNFFILPLFAFANAGVNLQNISMSELFGSVPMGIMLGLFIGKQLGVFGFGYLAVKLKIAKLPKESTLIQFYGVAVLAGIGFTMSLFIDSLAYEDAQIYQYADKLAVLIGSLLSGIWGYIVLSKSSAP</sequence>
<proteinExistence type="inferred from homology"/>
<feature type="chain" id="PRO_0000334345" description="Na(+)/H(+) antiporter NhaA">
    <location>
        <begin position="1"/>
        <end position="388"/>
    </location>
</feature>
<feature type="transmembrane region" description="Helical" evidence="1">
    <location>
        <begin position="14"/>
        <end position="34"/>
    </location>
</feature>
<feature type="transmembrane region" description="Helical" evidence="1">
    <location>
        <begin position="59"/>
        <end position="79"/>
    </location>
</feature>
<feature type="transmembrane region" description="Helical" evidence="1">
    <location>
        <begin position="95"/>
        <end position="115"/>
    </location>
</feature>
<feature type="transmembrane region" description="Helical" evidence="1">
    <location>
        <begin position="125"/>
        <end position="145"/>
    </location>
</feature>
<feature type="transmembrane region" description="Helical" evidence="1">
    <location>
        <begin position="154"/>
        <end position="174"/>
    </location>
</feature>
<feature type="transmembrane region" description="Helical" evidence="1">
    <location>
        <begin position="177"/>
        <end position="197"/>
    </location>
</feature>
<feature type="transmembrane region" description="Helical" evidence="1">
    <location>
        <begin position="200"/>
        <end position="220"/>
    </location>
</feature>
<feature type="transmembrane region" description="Helical" evidence="1">
    <location>
        <begin position="222"/>
        <end position="242"/>
    </location>
</feature>
<feature type="transmembrane region" description="Helical" evidence="1">
    <location>
        <begin position="257"/>
        <end position="277"/>
    </location>
</feature>
<feature type="transmembrane region" description="Helical" evidence="1">
    <location>
        <begin position="295"/>
        <end position="315"/>
    </location>
</feature>
<feature type="transmembrane region" description="Helical" evidence="1">
    <location>
        <begin position="328"/>
        <end position="348"/>
    </location>
</feature>
<feature type="transmembrane region" description="Helical" evidence="1">
    <location>
        <begin position="362"/>
        <end position="382"/>
    </location>
</feature>
<gene>
    <name evidence="1" type="primary">nhaA</name>
    <name type="ordered locus">NIS_0031</name>
</gene>
<organism>
    <name type="scientific">Nitratiruptor sp. (strain SB155-2)</name>
    <dbReference type="NCBI Taxonomy" id="387092"/>
    <lineage>
        <taxon>Bacteria</taxon>
        <taxon>Pseudomonadati</taxon>
        <taxon>Campylobacterota</taxon>
        <taxon>Epsilonproteobacteria</taxon>
        <taxon>Nautiliales</taxon>
        <taxon>Nitratiruptoraceae</taxon>
        <taxon>Nitratiruptor</taxon>
    </lineage>
</organism>
<comment type="function">
    <text evidence="1">Na(+)/H(+) antiporter that extrudes sodium in exchange for external protons.</text>
</comment>
<comment type="catalytic activity">
    <reaction evidence="1">
        <text>Na(+)(in) + 2 H(+)(out) = Na(+)(out) + 2 H(+)(in)</text>
        <dbReference type="Rhea" id="RHEA:29251"/>
        <dbReference type="ChEBI" id="CHEBI:15378"/>
        <dbReference type="ChEBI" id="CHEBI:29101"/>
    </reaction>
    <physiologicalReaction direction="left-to-right" evidence="1">
        <dbReference type="Rhea" id="RHEA:29252"/>
    </physiologicalReaction>
</comment>
<comment type="subcellular location">
    <subcellularLocation>
        <location evidence="1">Cell inner membrane</location>
        <topology evidence="1">Multi-pass membrane protein</topology>
    </subcellularLocation>
</comment>
<comment type="similarity">
    <text evidence="1">Belongs to the NhaA Na(+)/H(+) (TC 2.A.33) antiporter family.</text>
</comment>
<dbReference type="EMBL" id="AP009178">
    <property type="protein sequence ID" value="BAF69149.1"/>
    <property type="molecule type" value="Genomic_DNA"/>
</dbReference>
<dbReference type="RefSeq" id="WP_011979575.1">
    <property type="nucleotide sequence ID" value="NC_009662.1"/>
</dbReference>
<dbReference type="SMR" id="A6Q0Z0"/>
<dbReference type="FunCoup" id="A6Q0Z0">
    <property type="interactions" value="54"/>
</dbReference>
<dbReference type="STRING" id="387092.NIS_0031"/>
<dbReference type="KEGG" id="nis:NIS_0031"/>
<dbReference type="eggNOG" id="COG3004">
    <property type="taxonomic scope" value="Bacteria"/>
</dbReference>
<dbReference type="HOGENOM" id="CLU_015803_1_0_7"/>
<dbReference type="InParanoid" id="A6Q0Z0"/>
<dbReference type="OrthoDB" id="9808135at2"/>
<dbReference type="Proteomes" id="UP000001118">
    <property type="component" value="Chromosome"/>
</dbReference>
<dbReference type="GO" id="GO:0005886">
    <property type="term" value="C:plasma membrane"/>
    <property type="evidence" value="ECO:0007669"/>
    <property type="project" value="UniProtKB-SubCell"/>
</dbReference>
<dbReference type="GO" id="GO:0015385">
    <property type="term" value="F:sodium:proton antiporter activity"/>
    <property type="evidence" value="ECO:0007669"/>
    <property type="project" value="TreeGrafter"/>
</dbReference>
<dbReference type="GO" id="GO:0006885">
    <property type="term" value="P:regulation of pH"/>
    <property type="evidence" value="ECO:0007669"/>
    <property type="project" value="InterPro"/>
</dbReference>
<dbReference type="Gene3D" id="1.20.1530.10">
    <property type="entry name" value="Na+/H+ antiporter like domain"/>
    <property type="match status" value="1"/>
</dbReference>
<dbReference type="HAMAP" id="MF_01844">
    <property type="entry name" value="NhaA"/>
    <property type="match status" value="1"/>
</dbReference>
<dbReference type="InterPro" id="IPR023171">
    <property type="entry name" value="Na/H_antiporter_dom_sf"/>
</dbReference>
<dbReference type="InterPro" id="IPR004670">
    <property type="entry name" value="NhaA"/>
</dbReference>
<dbReference type="NCBIfam" id="TIGR00773">
    <property type="entry name" value="NhaA"/>
    <property type="match status" value="1"/>
</dbReference>
<dbReference type="NCBIfam" id="NF007111">
    <property type="entry name" value="PRK09560.1"/>
    <property type="match status" value="1"/>
</dbReference>
<dbReference type="NCBIfam" id="NF007112">
    <property type="entry name" value="PRK09561.1"/>
    <property type="match status" value="1"/>
</dbReference>
<dbReference type="PANTHER" id="PTHR30341:SF0">
    <property type="entry name" value="NA(+)_H(+) ANTIPORTER NHAA"/>
    <property type="match status" value="1"/>
</dbReference>
<dbReference type="PANTHER" id="PTHR30341">
    <property type="entry name" value="SODIUM ION/PROTON ANTIPORTER NHAA-RELATED"/>
    <property type="match status" value="1"/>
</dbReference>
<dbReference type="Pfam" id="PF06965">
    <property type="entry name" value="Na_H_antiport_1"/>
    <property type="match status" value="1"/>
</dbReference>
<protein>
    <recommendedName>
        <fullName evidence="1">Na(+)/H(+) antiporter NhaA</fullName>
    </recommendedName>
    <alternativeName>
        <fullName evidence="1">Sodium/proton antiporter NhaA</fullName>
    </alternativeName>
</protein>
<keyword id="KW-0050">Antiport</keyword>
<keyword id="KW-0997">Cell inner membrane</keyword>
<keyword id="KW-1003">Cell membrane</keyword>
<keyword id="KW-0406">Ion transport</keyword>
<keyword id="KW-0472">Membrane</keyword>
<keyword id="KW-1185">Reference proteome</keyword>
<keyword id="KW-0915">Sodium</keyword>
<keyword id="KW-0739">Sodium transport</keyword>
<keyword id="KW-0812">Transmembrane</keyword>
<keyword id="KW-1133">Transmembrane helix</keyword>
<keyword id="KW-0813">Transport</keyword>
<accession>A6Q0Z0</accession>
<reference key="1">
    <citation type="journal article" date="2007" name="Proc. Natl. Acad. Sci. U.S.A.">
        <title>Deep-sea vent epsilon-proteobacterial genomes provide insights into emergence of pathogens.</title>
        <authorList>
            <person name="Nakagawa S."/>
            <person name="Takaki Y."/>
            <person name="Shimamura S."/>
            <person name="Reysenbach A.-L."/>
            <person name="Takai K."/>
            <person name="Horikoshi K."/>
        </authorList>
    </citation>
    <scope>NUCLEOTIDE SEQUENCE [LARGE SCALE GENOMIC DNA]</scope>
    <source>
        <strain>SB155-2</strain>
    </source>
</reference>